<feature type="chain" id="PRO_0000111542" description="Ribonuclease HII">
    <location>
        <begin position="1"/>
        <end position="255"/>
    </location>
</feature>
<feature type="domain" description="RNase H type-2" evidence="2">
    <location>
        <begin position="72"/>
        <end position="255"/>
    </location>
</feature>
<feature type="binding site" evidence="1">
    <location>
        <position position="78"/>
    </location>
    <ligand>
        <name>a divalent metal cation</name>
        <dbReference type="ChEBI" id="CHEBI:60240"/>
    </ligand>
</feature>
<feature type="binding site" evidence="1">
    <location>
        <position position="79"/>
    </location>
    <ligand>
        <name>a divalent metal cation</name>
        <dbReference type="ChEBI" id="CHEBI:60240"/>
    </ligand>
</feature>
<feature type="binding site" evidence="1">
    <location>
        <position position="170"/>
    </location>
    <ligand>
        <name>a divalent metal cation</name>
        <dbReference type="ChEBI" id="CHEBI:60240"/>
    </ligand>
</feature>
<organism>
    <name type="scientific">Bacillus subtilis (strain 168)</name>
    <dbReference type="NCBI Taxonomy" id="224308"/>
    <lineage>
        <taxon>Bacteria</taxon>
        <taxon>Bacillati</taxon>
        <taxon>Bacillota</taxon>
        <taxon>Bacilli</taxon>
        <taxon>Bacillales</taxon>
        <taxon>Bacillaceae</taxon>
        <taxon>Bacillus</taxon>
    </lineage>
</organism>
<accession>O31744</accession>
<gene>
    <name type="primary">rnhB</name>
    <name type="synonym">rnh</name>
    <name type="ordered locus">BSU16060</name>
</gene>
<evidence type="ECO:0000250" key="1"/>
<evidence type="ECO:0000255" key="2">
    <source>
        <dbReference type="PROSITE-ProRule" id="PRU01319"/>
    </source>
</evidence>
<evidence type="ECO:0000305" key="3"/>
<keyword id="KW-0963">Cytoplasm</keyword>
<keyword id="KW-0255">Endonuclease</keyword>
<keyword id="KW-0378">Hydrolase</keyword>
<keyword id="KW-0464">Manganese</keyword>
<keyword id="KW-0479">Metal-binding</keyword>
<keyword id="KW-0540">Nuclease</keyword>
<keyword id="KW-1185">Reference proteome</keyword>
<comment type="function">
    <text evidence="1">Endonuclease that specifically degrades the RNA of RNA-DNA hybrids.</text>
</comment>
<comment type="catalytic activity">
    <reaction>
        <text>Endonucleolytic cleavage to 5'-phosphomonoester.</text>
        <dbReference type="EC" id="3.1.26.4"/>
    </reaction>
</comment>
<comment type="cofactor">
    <cofactor evidence="1">
        <name>Mn(2+)</name>
        <dbReference type="ChEBI" id="CHEBI:29035"/>
    </cofactor>
    <cofactor evidence="1">
        <name>Mg(2+)</name>
        <dbReference type="ChEBI" id="CHEBI:18420"/>
    </cofactor>
    <text evidence="1">Manganese or magnesium. Binds 1 divalent metal ion per monomer in the absence of substrate. May bind a second metal ion after substrate binding.</text>
</comment>
<comment type="subcellular location">
    <subcellularLocation>
        <location evidence="3">Cytoplasm</location>
    </subcellularLocation>
</comment>
<comment type="similarity">
    <text evidence="3">Belongs to the RNase HII family.</text>
</comment>
<protein>
    <recommendedName>
        <fullName>Ribonuclease HII</fullName>
        <shortName>RNase HII</shortName>
        <ecNumber>3.1.26.4</ecNumber>
    </recommendedName>
</protein>
<sequence length="255" mass="28355">MNTLTVKDIKDRLQEVKDAQDPFIAQCENDPRKSVQTLVEQWLKKQAKEKALKEQWVNMTSYERLARNKGFRLIAGVDEVGRGPLAGPVVASAVILPEECEILGLTDSKKLSEKKREEYYELIMKEALAVGIGIVEATVIDEINIYEASKMAMVKAIQDLSDTPDYLLVDAMTLPLDTAQASIIKGDAKSVSIAAGACIAKVTRDRMMSAYAETYPMYGFEKNKGYGTKEHLEALAAYGPTELHRKTFAPVQSFR</sequence>
<proteinExistence type="evidence at protein level"/>
<name>RNH2_BACSU</name>
<dbReference type="EC" id="3.1.26.4"/>
<dbReference type="EMBL" id="AL009126">
    <property type="protein sequence ID" value="CAB13479.1"/>
    <property type="molecule type" value="Genomic_DNA"/>
</dbReference>
<dbReference type="PIR" id="C69693">
    <property type="entry name" value="C69693"/>
</dbReference>
<dbReference type="RefSeq" id="NP_389488.1">
    <property type="nucleotide sequence ID" value="NC_000964.3"/>
</dbReference>
<dbReference type="RefSeq" id="WP_003245658.1">
    <property type="nucleotide sequence ID" value="NZ_OZ025638.1"/>
</dbReference>
<dbReference type="SMR" id="O31744"/>
<dbReference type="FunCoup" id="O31744">
    <property type="interactions" value="608"/>
</dbReference>
<dbReference type="STRING" id="224308.BSU16060"/>
<dbReference type="PaxDb" id="224308-BSU16060"/>
<dbReference type="EnsemblBacteria" id="CAB13479">
    <property type="protein sequence ID" value="CAB13479"/>
    <property type="gene ID" value="BSU_16060"/>
</dbReference>
<dbReference type="GeneID" id="940133"/>
<dbReference type="KEGG" id="bsu:BSU16060"/>
<dbReference type="PATRIC" id="fig|224308.179.peg.1746"/>
<dbReference type="eggNOG" id="COG0164">
    <property type="taxonomic scope" value="Bacteria"/>
</dbReference>
<dbReference type="InParanoid" id="O31744"/>
<dbReference type="OrthoDB" id="9803420at2"/>
<dbReference type="PhylomeDB" id="O31744"/>
<dbReference type="BioCyc" id="BSUB:BSU16060-MONOMER"/>
<dbReference type="Proteomes" id="UP000001570">
    <property type="component" value="Chromosome"/>
</dbReference>
<dbReference type="GO" id="GO:0005737">
    <property type="term" value="C:cytoplasm"/>
    <property type="evidence" value="ECO:0007669"/>
    <property type="project" value="UniProtKB-SubCell"/>
</dbReference>
<dbReference type="GO" id="GO:0032299">
    <property type="term" value="C:ribonuclease H2 complex"/>
    <property type="evidence" value="ECO:0000318"/>
    <property type="project" value="GO_Central"/>
</dbReference>
<dbReference type="GO" id="GO:0030145">
    <property type="term" value="F:manganese ion binding"/>
    <property type="evidence" value="ECO:0007669"/>
    <property type="project" value="UniProtKB-UniRule"/>
</dbReference>
<dbReference type="GO" id="GO:0003723">
    <property type="term" value="F:RNA binding"/>
    <property type="evidence" value="ECO:0007669"/>
    <property type="project" value="InterPro"/>
</dbReference>
<dbReference type="GO" id="GO:0004523">
    <property type="term" value="F:RNA-DNA hybrid ribonuclease activity"/>
    <property type="evidence" value="ECO:0000318"/>
    <property type="project" value="GO_Central"/>
</dbReference>
<dbReference type="GO" id="GO:0043137">
    <property type="term" value="P:DNA replication, removal of RNA primer"/>
    <property type="evidence" value="ECO:0000318"/>
    <property type="project" value="GO_Central"/>
</dbReference>
<dbReference type="GO" id="GO:0006298">
    <property type="term" value="P:mismatch repair"/>
    <property type="evidence" value="ECO:0000318"/>
    <property type="project" value="GO_Central"/>
</dbReference>
<dbReference type="CDD" id="cd07182">
    <property type="entry name" value="RNase_HII_bacteria_HII_like"/>
    <property type="match status" value="1"/>
</dbReference>
<dbReference type="FunFam" id="3.30.420.10:FF:000006">
    <property type="entry name" value="Ribonuclease HII"/>
    <property type="match status" value="1"/>
</dbReference>
<dbReference type="Gene3D" id="3.30.420.10">
    <property type="entry name" value="Ribonuclease H-like superfamily/Ribonuclease H"/>
    <property type="match status" value="1"/>
</dbReference>
<dbReference type="HAMAP" id="MF_00052_B">
    <property type="entry name" value="RNase_HII_B"/>
    <property type="match status" value="1"/>
</dbReference>
<dbReference type="InterPro" id="IPR022898">
    <property type="entry name" value="RNase_HII"/>
</dbReference>
<dbReference type="InterPro" id="IPR001352">
    <property type="entry name" value="RNase_HII/HIII"/>
</dbReference>
<dbReference type="InterPro" id="IPR024567">
    <property type="entry name" value="RNase_HII/HIII_dom"/>
</dbReference>
<dbReference type="InterPro" id="IPR012337">
    <property type="entry name" value="RNaseH-like_sf"/>
</dbReference>
<dbReference type="InterPro" id="IPR036397">
    <property type="entry name" value="RNaseH_sf"/>
</dbReference>
<dbReference type="NCBIfam" id="NF000594">
    <property type="entry name" value="PRK00015.1-1"/>
    <property type="match status" value="1"/>
</dbReference>
<dbReference type="NCBIfam" id="NF000595">
    <property type="entry name" value="PRK00015.1-3"/>
    <property type="match status" value="1"/>
</dbReference>
<dbReference type="PANTHER" id="PTHR10954">
    <property type="entry name" value="RIBONUCLEASE H2 SUBUNIT A"/>
    <property type="match status" value="1"/>
</dbReference>
<dbReference type="PANTHER" id="PTHR10954:SF18">
    <property type="entry name" value="RIBONUCLEASE HII"/>
    <property type="match status" value="1"/>
</dbReference>
<dbReference type="Pfam" id="PF01351">
    <property type="entry name" value="RNase_HII"/>
    <property type="match status" value="1"/>
</dbReference>
<dbReference type="SUPFAM" id="SSF53098">
    <property type="entry name" value="Ribonuclease H-like"/>
    <property type="match status" value="1"/>
</dbReference>
<dbReference type="PROSITE" id="PS51975">
    <property type="entry name" value="RNASE_H_2"/>
    <property type="match status" value="1"/>
</dbReference>
<reference key="1">
    <citation type="journal article" date="1997" name="Nature">
        <title>The complete genome sequence of the Gram-positive bacterium Bacillus subtilis.</title>
        <authorList>
            <person name="Kunst F."/>
            <person name="Ogasawara N."/>
            <person name="Moszer I."/>
            <person name="Albertini A.M."/>
            <person name="Alloni G."/>
            <person name="Azevedo V."/>
            <person name="Bertero M.G."/>
            <person name="Bessieres P."/>
            <person name="Bolotin A."/>
            <person name="Borchert S."/>
            <person name="Borriss R."/>
            <person name="Boursier L."/>
            <person name="Brans A."/>
            <person name="Braun M."/>
            <person name="Brignell S.C."/>
            <person name="Bron S."/>
            <person name="Brouillet S."/>
            <person name="Bruschi C.V."/>
            <person name="Caldwell B."/>
            <person name="Capuano V."/>
            <person name="Carter N.M."/>
            <person name="Choi S.-K."/>
            <person name="Codani J.-J."/>
            <person name="Connerton I.F."/>
            <person name="Cummings N.J."/>
            <person name="Daniel R.A."/>
            <person name="Denizot F."/>
            <person name="Devine K.M."/>
            <person name="Duesterhoeft A."/>
            <person name="Ehrlich S.D."/>
            <person name="Emmerson P.T."/>
            <person name="Entian K.-D."/>
            <person name="Errington J."/>
            <person name="Fabret C."/>
            <person name="Ferrari E."/>
            <person name="Foulger D."/>
            <person name="Fritz C."/>
            <person name="Fujita M."/>
            <person name="Fujita Y."/>
            <person name="Fuma S."/>
            <person name="Galizzi A."/>
            <person name="Galleron N."/>
            <person name="Ghim S.-Y."/>
            <person name="Glaser P."/>
            <person name="Goffeau A."/>
            <person name="Golightly E.J."/>
            <person name="Grandi G."/>
            <person name="Guiseppi G."/>
            <person name="Guy B.J."/>
            <person name="Haga K."/>
            <person name="Haiech J."/>
            <person name="Harwood C.R."/>
            <person name="Henaut A."/>
            <person name="Hilbert H."/>
            <person name="Holsappel S."/>
            <person name="Hosono S."/>
            <person name="Hullo M.-F."/>
            <person name="Itaya M."/>
            <person name="Jones L.-M."/>
            <person name="Joris B."/>
            <person name="Karamata D."/>
            <person name="Kasahara Y."/>
            <person name="Klaerr-Blanchard M."/>
            <person name="Klein C."/>
            <person name="Kobayashi Y."/>
            <person name="Koetter P."/>
            <person name="Koningstein G."/>
            <person name="Krogh S."/>
            <person name="Kumano M."/>
            <person name="Kurita K."/>
            <person name="Lapidus A."/>
            <person name="Lardinois S."/>
            <person name="Lauber J."/>
            <person name="Lazarevic V."/>
            <person name="Lee S.-M."/>
            <person name="Levine A."/>
            <person name="Liu H."/>
            <person name="Masuda S."/>
            <person name="Mauel C."/>
            <person name="Medigue C."/>
            <person name="Medina N."/>
            <person name="Mellado R.P."/>
            <person name="Mizuno M."/>
            <person name="Moestl D."/>
            <person name="Nakai S."/>
            <person name="Noback M."/>
            <person name="Noone D."/>
            <person name="O'Reilly M."/>
            <person name="Ogawa K."/>
            <person name="Ogiwara A."/>
            <person name="Oudega B."/>
            <person name="Park S.-H."/>
            <person name="Parro V."/>
            <person name="Pohl T.M."/>
            <person name="Portetelle D."/>
            <person name="Porwollik S."/>
            <person name="Prescott A.M."/>
            <person name="Presecan E."/>
            <person name="Pujic P."/>
            <person name="Purnelle B."/>
            <person name="Rapoport G."/>
            <person name="Rey M."/>
            <person name="Reynolds S."/>
            <person name="Rieger M."/>
            <person name="Rivolta C."/>
            <person name="Rocha E."/>
            <person name="Roche B."/>
            <person name="Rose M."/>
            <person name="Sadaie Y."/>
            <person name="Sato T."/>
            <person name="Scanlan E."/>
            <person name="Schleich S."/>
            <person name="Schroeter R."/>
            <person name="Scoffone F."/>
            <person name="Sekiguchi J."/>
            <person name="Sekowska A."/>
            <person name="Seror S.J."/>
            <person name="Serror P."/>
            <person name="Shin B.-S."/>
            <person name="Soldo B."/>
            <person name="Sorokin A."/>
            <person name="Tacconi E."/>
            <person name="Takagi T."/>
            <person name="Takahashi H."/>
            <person name="Takemaru K."/>
            <person name="Takeuchi M."/>
            <person name="Tamakoshi A."/>
            <person name="Tanaka T."/>
            <person name="Terpstra P."/>
            <person name="Tognoni A."/>
            <person name="Tosato V."/>
            <person name="Uchiyama S."/>
            <person name="Vandenbol M."/>
            <person name="Vannier F."/>
            <person name="Vassarotti A."/>
            <person name="Viari A."/>
            <person name="Wambutt R."/>
            <person name="Wedler E."/>
            <person name="Wedler H."/>
            <person name="Weitzenegger T."/>
            <person name="Winters P."/>
            <person name="Wipat A."/>
            <person name="Yamamoto H."/>
            <person name="Yamane K."/>
            <person name="Yasumoto K."/>
            <person name="Yata K."/>
            <person name="Yoshida K."/>
            <person name="Yoshikawa H.-F."/>
            <person name="Zumstein E."/>
            <person name="Yoshikawa H."/>
            <person name="Danchin A."/>
        </authorList>
    </citation>
    <scope>NUCLEOTIDE SEQUENCE [LARGE SCALE GENOMIC DNA]</scope>
    <source>
        <strain>168</strain>
    </source>
</reference>
<reference key="2">
    <citation type="journal article" date="1999" name="J. Bacteriol.">
        <title>Isolation of RNase H genes that are essential for growth of Bacillus subtilis 168.</title>
        <authorList>
            <person name="Itaya M."/>
            <person name="Omori A."/>
            <person name="Kanaya S."/>
            <person name="Crouch R.J."/>
            <person name="Tanaka T."/>
            <person name="Kondo K."/>
        </authorList>
    </citation>
    <scope>CHARACTERIZATION</scope>
</reference>
<reference key="3">
    <citation type="journal article" date="1999" name="Biochemistry">
        <title>Identification of the genes encoding Mn2+-dependent RNase HII and Mg2+-dependent RNase HIII from Bacillus subtilis: classification of RNases H into three families.</title>
        <authorList>
            <person name="Ohtani N."/>
            <person name="Haruki M."/>
            <person name="Morikawa M."/>
            <person name="Crouch R.J."/>
            <person name="Itaya M."/>
            <person name="Kanaya S."/>
        </authorList>
    </citation>
    <scope>CHARACTERIZATION</scope>
</reference>